<gene>
    <name type="primary">smc5</name>
</gene>
<comment type="function">
    <text evidence="1">Core component of the SMC5-SMC6 complex, a complex involved in repair of DNA double-strand breaks by homologous recombination. The complex may promote sister chromatid homologous recombination by recruiting the SMC1-SMC3 cohesin complex to double-strand breaks. The complex is required for telomere maintenance via recombination and mediates sumoylation of shelterin complex (telosome) components. Required for sister chromatid cohesion during prometaphase and mitotic progression; the function seems to be independent of smc6 (By similarity).</text>
</comment>
<comment type="subunit">
    <text evidence="1">Forms a heterodimer with smc6. Component of the SMC5-SMC6 complex which consists at least of smc5, smc6, nsmce2, nsmce1 and nsmce4a (By similarity).</text>
</comment>
<comment type="subcellular location">
    <subcellularLocation>
        <location evidence="1">Nucleus</location>
    </subcellularLocation>
    <subcellularLocation>
        <location evidence="1">Chromosome</location>
    </subcellularLocation>
    <subcellularLocation>
        <location evidence="1">Chromosome</location>
        <location evidence="1">Telomere</location>
    </subcellularLocation>
    <text evidence="1">Associates with chromatin.</text>
</comment>
<comment type="domain">
    <text evidence="1">The flexible hinge domain, which separates the large intramolecular coiled coil regions, allows the heterotypic interaction with the corresponding domain of smc6, forming a V-shaped heterodimer.</text>
</comment>
<comment type="disruption phenotype">
    <text evidence="4">Smc5 depletion in zebrafish embryos using CRISPR/Cas9-mediated genome editing or morpholino gene knockdown results in a significant reduction in head size and aberrant craniofacial patterning in the pharyngeal skeleton.</text>
</comment>
<comment type="similarity">
    <text evidence="5">Belongs to the SMC family. SMC5 subfamily.</text>
</comment>
<name>SMC5_DANRE</name>
<sequence>MEQPHKRKRKSHELSNSQPSDREPATSTSANAREGDFMEGAIVRITMHNFLTYDHSEVFPGPKLNMIVGANGTGKSSIVCAICLGLAGKTSVLGRGDKVGLYVKRGCQRGSVEIELYRTRGNLIVTREIQVENNQSTWMLNKKHASQKAVEEAVRELHIQVGNLCQFLPQEKVGEFAKMSNSELLEATEKSVGPPEMYEFHCELKTFRTKERDLENVCKEKGNFLEKARQRNERNKLDVERYYMKKRHLDRIQMLEKKKPWVEYETARKELEGVKKERDEMKRKLRFLKEAQEPLLRKIRSVESELQPIEQQMKEMTNRIKEATQKCKQKHDQLELKNKEVDDIKQDMSLKQTEEADRQKRIGHTQLMIRDLQKELQNMGTIEDVTPQIEAINAELRNIQEERARLESESLDLRRDKDEITGEFARLQNRLRSLDDMMKIKEEKLRSRFRDTYTALEWLRKNRDRYEGVVHEPMMLVINVRDARHAKYIETHISVNDLRAFVFQRQDDNDKFMNEMRDTQRLRVNSIIAPTESCSKRPPSRPIETLKPYGFISYLREMFDAPEEVMSYLCHQYRVNDVPIGTEKTKGMIESVIKDLQLRTIYTAEERYNVKKSAYSNNVVSSNSALRPPQFLTTTIDVEERRQLEEQLRAAERQKQSIDQRMAAIREQQANLDRRDNELRANKKKLSDLKSKKRQLEQKISTKQDSLRQMEQNEINLVAIEEEANAKIAAVNNKKVTIMGEYLSHLQSKARLNMEKVYLALQSAGLSAEKTKLETDVRESSAELKRAEVDYTKLDKIKTNLLMTCKTLMKRASEICNMTPGETAVPEELHAAFSLLPETLDEIDAMLNEERTRAECFTGLSDAVVDEYNRREQEIKNLEKELDDKTNELTTYRRNIAEAKERWLNPLKKLVELINVRFSDFFQSMQCAGEVDLHSENEEEYDKYGIRIQVQFRRNTRMHELTPHHQSGGERSVTTMLYLMSLQELNRCPFRVVDEINQGMDPVNERRVFDIVVRAACGVNTSQYFFITPKLLQNLQYAEQMTILCVHNGPQMLPPNKWNEKAFIQRARRRNRT</sequence>
<organism>
    <name type="scientific">Danio rerio</name>
    <name type="common">Zebrafish</name>
    <name type="synonym">Brachydanio rerio</name>
    <dbReference type="NCBI Taxonomy" id="7955"/>
    <lineage>
        <taxon>Eukaryota</taxon>
        <taxon>Metazoa</taxon>
        <taxon>Chordata</taxon>
        <taxon>Craniata</taxon>
        <taxon>Vertebrata</taxon>
        <taxon>Euteleostomi</taxon>
        <taxon>Actinopterygii</taxon>
        <taxon>Neopterygii</taxon>
        <taxon>Teleostei</taxon>
        <taxon>Ostariophysi</taxon>
        <taxon>Cypriniformes</taxon>
        <taxon>Danionidae</taxon>
        <taxon>Danioninae</taxon>
        <taxon>Danio</taxon>
    </lineage>
</organism>
<keyword id="KW-0067">ATP-binding</keyword>
<keyword id="KW-0158">Chromosome</keyword>
<keyword id="KW-0175">Coiled coil</keyword>
<keyword id="KW-0547">Nucleotide-binding</keyword>
<keyword id="KW-0539">Nucleus</keyword>
<keyword id="KW-1185">Reference proteome</keyword>
<keyword id="KW-0779">Telomere</keyword>
<reference key="1">
    <citation type="journal article" date="2013" name="Nature">
        <title>The zebrafish reference genome sequence and its relationship to the human genome.</title>
        <authorList>
            <person name="Howe K."/>
            <person name="Clark M.D."/>
            <person name="Torroja C.F."/>
            <person name="Torrance J."/>
            <person name="Berthelot C."/>
            <person name="Muffato M."/>
            <person name="Collins J.E."/>
            <person name="Humphray S."/>
            <person name="McLaren K."/>
            <person name="Matthews L."/>
            <person name="McLaren S."/>
            <person name="Sealy I."/>
            <person name="Caccamo M."/>
            <person name="Churcher C."/>
            <person name="Scott C."/>
            <person name="Barrett J.C."/>
            <person name="Koch R."/>
            <person name="Rauch G.J."/>
            <person name="White S."/>
            <person name="Chow W."/>
            <person name="Kilian B."/>
            <person name="Quintais L.T."/>
            <person name="Guerra-Assuncao J.A."/>
            <person name="Zhou Y."/>
            <person name="Gu Y."/>
            <person name="Yen J."/>
            <person name="Vogel J.H."/>
            <person name="Eyre T."/>
            <person name="Redmond S."/>
            <person name="Banerjee R."/>
            <person name="Chi J."/>
            <person name="Fu B."/>
            <person name="Langley E."/>
            <person name="Maguire S.F."/>
            <person name="Laird G.K."/>
            <person name="Lloyd D."/>
            <person name="Kenyon E."/>
            <person name="Donaldson S."/>
            <person name="Sehra H."/>
            <person name="Almeida-King J."/>
            <person name="Loveland J."/>
            <person name="Trevanion S."/>
            <person name="Jones M."/>
            <person name="Quail M."/>
            <person name="Willey D."/>
            <person name="Hunt A."/>
            <person name="Burton J."/>
            <person name="Sims S."/>
            <person name="McLay K."/>
            <person name="Plumb B."/>
            <person name="Davis J."/>
            <person name="Clee C."/>
            <person name="Oliver K."/>
            <person name="Clark R."/>
            <person name="Riddle C."/>
            <person name="Elliot D."/>
            <person name="Threadgold G."/>
            <person name="Harden G."/>
            <person name="Ware D."/>
            <person name="Begum S."/>
            <person name="Mortimore B."/>
            <person name="Kerry G."/>
            <person name="Heath P."/>
            <person name="Phillimore B."/>
            <person name="Tracey A."/>
            <person name="Corby N."/>
            <person name="Dunn M."/>
            <person name="Johnson C."/>
            <person name="Wood J."/>
            <person name="Clark S."/>
            <person name="Pelan S."/>
            <person name="Griffiths G."/>
            <person name="Smith M."/>
            <person name="Glithero R."/>
            <person name="Howden P."/>
            <person name="Barker N."/>
            <person name="Lloyd C."/>
            <person name="Stevens C."/>
            <person name="Harley J."/>
            <person name="Holt K."/>
            <person name="Panagiotidis G."/>
            <person name="Lovell J."/>
            <person name="Beasley H."/>
            <person name="Henderson C."/>
            <person name="Gordon D."/>
            <person name="Auger K."/>
            <person name="Wright D."/>
            <person name="Collins J."/>
            <person name="Raisen C."/>
            <person name="Dyer L."/>
            <person name="Leung K."/>
            <person name="Robertson L."/>
            <person name="Ambridge K."/>
            <person name="Leongamornlert D."/>
            <person name="McGuire S."/>
            <person name="Gilderthorp R."/>
            <person name="Griffiths C."/>
            <person name="Manthravadi D."/>
            <person name="Nichol S."/>
            <person name="Barker G."/>
            <person name="Whitehead S."/>
            <person name="Kay M."/>
            <person name="Brown J."/>
            <person name="Murnane C."/>
            <person name="Gray E."/>
            <person name="Humphries M."/>
            <person name="Sycamore N."/>
            <person name="Barker D."/>
            <person name="Saunders D."/>
            <person name="Wallis J."/>
            <person name="Babbage A."/>
            <person name="Hammond S."/>
            <person name="Mashreghi-Mohammadi M."/>
            <person name="Barr L."/>
            <person name="Martin S."/>
            <person name="Wray P."/>
            <person name="Ellington A."/>
            <person name="Matthews N."/>
            <person name="Ellwood M."/>
            <person name="Woodmansey R."/>
            <person name="Clark G."/>
            <person name="Cooper J."/>
            <person name="Tromans A."/>
            <person name="Grafham D."/>
            <person name="Skuce C."/>
            <person name="Pandian R."/>
            <person name="Andrews R."/>
            <person name="Harrison E."/>
            <person name="Kimberley A."/>
            <person name="Garnett J."/>
            <person name="Fosker N."/>
            <person name="Hall R."/>
            <person name="Garner P."/>
            <person name="Kelly D."/>
            <person name="Bird C."/>
            <person name="Palmer S."/>
            <person name="Gehring I."/>
            <person name="Berger A."/>
            <person name="Dooley C.M."/>
            <person name="Ersan-Urun Z."/>
            <person name="Eser C."/>
            <person name="Geiger H."/>
            <person name="Geisler M."/>
            <person name="Karotki L."/>
            <person name="Kirn A."/>
            <person name="Konantz J."/>
            <person name="Konantz M."/>
            <person name="Oberlander M."/>
            <person name="Rudolph-Geiger S."/>
            <person name="Teucke M."/>
            <person name="Lanz C."/>
            <person name="Raddatz G."/>
            <person name="Osoegawa K."/>
            <person name="Zhu B."/>
            <person name="Rapp A."/>
            <person name="Widaa S."/>
            <person name="Langford C."/>
            <person name="Yang F."/>
            <person name="Schuster S.C."/>
            <person name="Carter N.P."/>
            <person name="Harrow J."/>
            <person name="Ning Z."/>
            <person name="Herrero J."/>
            <person name="Searle S.M."/>
            <person name="Enright A."/>
            <person name="Geisler R."/>
            <person name="Plasterk R.H."/>
            <person name="Lee C."/>
            <person name="Westerfield M."/>
            <person name="de Jong P.J."/>
            <person name="Zon L.I."/>
            <person name="Postlethwait J.H."/>
            <person name="Nusslein-Volhard C."/>
            <person name="Hubbard T.J."/>
            <person name="Roest Crollius H."/>
            <person name="Rogers J."/>
            <person name="Stemple D.L."/>
        </authorList>
    </citation>
    <scope>NUCLEOTIDE SEQUENCE [LARGE SCALE MRNA]</scope>
    <source>
        <strain>Tuebingen</strain>
    </source>
</reference>
<reference key="2">
    <citation type="journal article" date="2022" name="Nat. Commun.">
        <title>Pathogenic variants in SLF2 and SMC5 cause segmented chromosomes and mosaic variegated hyperploidy.</title>
        <authorList>
            <person name="Grange L.J."/>
            <person name="Reynolds J.J."/>
            <person name="Ullah F."/>
            <person name="Isidor B."/>
            <person name="Shearer R.F."/>
            <person name="Latypova X."/>
            <person name="Baxley R.M."/>
            <person name="Oliver A.W."/>
            <person name="Ganesh A."/>
            <person name="Cooke S.L."/>
            <person name="Jhujh S.S."/>
            <person name="McNee G.S."/>
            <person name="Hollingworth R."/>
            <person name="Higgs M.R."/>
            <person name="Natsume T."/>
            <person name="Khan T."/>
            <person name="Martos-Moreno G.A."/>
            <person name="Chupp S."/>
            <person name="Mathew C.G."/>
            <person name="Parry D."/>
            <person name="Simpson M.A."/>
            <person name="Nahavandi N."/>
            <person name="Yueksel Z."/>
            <person name="Drasdo M."/>
            <person name="Kron A."/>
            <person name="Vogt P."/>
            <person name="Jonasson A."/>
            <person name="Seth S.A."/>
            <person name="Gonzaga-Jauregui C."/>
            <person name="Brigatti K.W."/>
            <person name="Stegmann A.P.A."/>
            <person name="Kanemaki M."/>
            <person name="Josifova D."/>
            <person name="Uchiyama Y."/>
            <person name="Oh Y."/>
            <person name="Morimoto A."/>
            <person name="Osaka H."/>
            <person name="Ammous Z."/>
            <person name="Argente J."/>
            <person name="Matsumoto N."/>
            <person name="Stumpel C.T.R.M."/>
            <person name="Taylor A.M.R."/>
            <person name="Jackson A.P."/>
            <person name="Bielinsky A.K."/>
            <person name="Mailand N."/>
            <person name="Le Caignec C."/>
            <person name="Davis E.E."/>
            <person name="Stewart G.S."/>
        </authorList>
    </citation>
    <scope>DISRUPTION PHENOTYPE</scope>
</reference>
<dbReference type="EMBL" id="BX640501">
    <property type="status" value="NOT_ANNOTATED_CDS"/>
    <property type="molecule type" value="Genomic_DNA"/>
</dbReference>
<dbReference type="RefSeq" id="NP_001180470.1">
    <property type="nucleotide sequence ID" value="NM_001193541.1"/>
</dbReference>
<dbReference type="SMR" id="E7F0W1"/>
<dbReference type="FunCoup" id="E7F0W1">
    <property type="interactions" value="2300"/>
</dbReference>
<dbReference type="PaxDb" id="7955-ENSDARP00000111416"/>
<dbReference type="PeptideAtlas" id="E7F0W1"/>
<dbReference type="Ensembl" id="ENSDART00000122170">
    <property type="protein sequence ID" value="ENSDARP00000111416"/>
    <property type="gene ID" value="ENSDARG00000044282"/>
</dbReference>
<dbReference type="GeneID" id="566749"/>
<dbReference type="KEGG" id="dre:566749"/>
<dbReference type="AGR" id="ZFIN:ZDB-GENE-061013-288"/>
<dbReference type="CTD" id="23137"/>
<dbReference type="ZFIN" id="ZDB-GENE-061013-288">
    <property type="gene designation" value="smc5"/>
</dbReference>
<dbReference type="eggNOG" id="KOG0979">
    <property type="taxonomic scope" value="Eukaryota"/>
</dbReference>
<dbReference type="OMA" id="RFWTSQP"/>
<dbReference type="OrthoDB" id="10254973at2759"/>
<dbReference type="PRO" id="PR:E7F0W1"/>
<dbReference type="Proteomes" id="UP000000437">
    <property type="component" value="Chromosome 10"/>
</dbReference>
<dbReference type="Bgee" id="ENSDARG00000044282">
    <property type="expression patterns" value="Expressed in testis and 27 other cell types or tissues"/>
</dbReference>
<dbReference type="ExpressionAtlas" id="E7F0W1">
    <property type="expression patterns" value="baseline and differential"/>
</dbReference>
<dbReference type="GO" id="GO:0000781">
    <property type="term" value="C:chromosome, telomeric region"/>
    <property type="evidence" value="ECO:0007669"/>
    <property type="project" value="UniProtKB-SubCell"/>
</dbReference>
<dbReference type="GO" id="GO:0005634">
    <property type="term" value="C:nucleus"/>
    <property type="evidence" value="ECO:0000318"/>
    <property type="project" value="GO_Central"/>
</dbReference>
<dbReference type="GO" id="GO:0030915">
    <property type="term" value="C:Smc5-Smc6 complex"/>
    <property type="evidence" value="ECO:0000318"/>
    <property type="project" value="GO_Central"/>
</dbReference>
<dbReference type="GO" id="GO:0005524">
    <property type="term" value="F:ATP binding"/>
    <property type="evidence" value="ECO:0007669"/>
    <property type="project" value="UniProtKB-KW"/>
</dbReference>
<dbReference type="GO" id="GO:0016887">
    <property type="term" value="F:ATP hydrolysis activity"/>
    <property type="evidence" value="ECO:0007669"/>
    <property type="project" value="InterPro"/>
</dbReference>
<dbReference type="GO" id="GO:0003697">
    <property type="term" value="F:single-stranded DNA binding"/>
    <property type="evidence" value="ECO:0000318"/>
    <property type="project" value="GO_Central"/>
</dbReference>
<dbReference type="GO" id="GO:0060536">
    <property type="term" value="P:cartilage morphogenesis"/>
    <property type="evidence" value="ECO:0000315"/>
    <property type="project" value="ZFIN"/>
</dbReference>
<dbReference type="GO" id="GO:0000724">
    <property type="term" value="P:double-strand break repair via homologous recombination"/>
    <property type="evidence" value="ECO:0000318"/>
    <property type="project" value="GO_Central"/>
</dbReference>
<dbReference type="GO" id="GO:1904748">
    <property type="term" value="P:regulation of apoptotic process involved in development"/>
    <property type="evidence" value="ECO:0000315"/>
    <property type="project" value="ZFIN"/>
</dbReference>
<dbReference type="FunFam" id="3.40.50.300:FF:001301">
    <property type="entry name" value="Structural maintenance of chromosomes 5"/>
    <property type="match status" value="1"/>
</dbReference>
<dbReference type="FunFam" id="3.40.50.300:FF:000793">
    <property type="entry name" value="Structural maintenance of chromosomes protein 5"/>
    <property type="match status" value="1"/>
</dbReference>
<dbReference type="Gene3D" id="1.10.287.1490">
    <property type="match status" value="1"/>
</dbReference>
<dbReference type="Gene3D" id="3.40.50.300">
    <property type="entry name" value="P-loop containing nucleotide triphosphate hydrolases"/>
    <property type="match status" value="2"/>
</dbReference>
<dbReference type="InterPro" id="IPR027417">
    <property type="entry name" value="P-loop_NTPase"/>
</dbReference>
<dbReference type="InterPro" id="IPR038729">
    <property type="entry name" value="Rad50/SbcC_AAA"/>
</dbReference>
<dbReference type="PANTHER" id="PTHR45916">
    <property type="entry name" value="STRUCTURAL MAINTENANCE OF CHROMOSOMES PROTEIN 5"/>
    <property type="match status" value="1"/>
</dbReference>
<dbReference type="PANTHER" id="PTHR45916:SF1">
    <property type="entry name" value="STRUCTURAL MAINTENANCE OF CHROMOSOMES PROTEIN 5"/>
    <property type="match status" value="1"/>
</dbReference>
<dbReference type="Pfam" id="PF13476">
    <property type="entry name" value="AAA_23"/>
    <property type="match status" value="1"/>
</dbReference>
<dbReference type="SUPFAM" id="SSF52540">
    <property type="entry name" value="P-loop containing nucleoside triphosphate hydrolases"/>
    <property type="match status" value="1"/>
</dbReference>
<accession>E7F0W1</accession>
<accession>A0A8M1NV01</accession>
<evidence type="ECO:0000250" key="1">
    <source>
        <dbReference type="UniProtKB" id="Q8IY18"/>
    </source>
</evidence>
<evidence type="ECO:0000255" key="2"/>
<evidence type="ECO:0000256" key="3">
    <source>
        <dbReference type="SAM" id="MobiDB-lite"/>
    </source>
</evidence>
<evidence type="ECO:0000269" key="4">
    <source>
    </source>
</evidence>
<evidence type="ECO:0000305" key="5"/>
<proteinExistence type="inferred from homology"/>
<feature type="chain" id="PRO_0000458073" description="Structural maintenance of chromosomes protein 5">
    <location>
        <begin position="1"/>
        <end position="1073"/>
    </location>
</feature>
<feature type="region of interest" description="Disordered" evidence="3">
    <location>
        <begin position="1"/>
        <end position="33"/>
    </location>
</feature>
<feature type="region of interest" description="Flexible hinge" evidence="1">
    <location>
        <begin position="435"/>
        <end position="635"/>
    </location>
</feature>
<feature type="region of interest" description="Disordered" evidence="3">
    <location>
        <begin position="684"/>
        <end position="705"/>
    </location>
</feature>
<feature type="coiled-coil region" evidence="2">
    <location>
        <begin position="264"/>
        <end position="340"/>
    </location>
</feature>
<feature type="coiled-coil region" evidence="2">
    <location>
        <begin position="389"/>
        <end position="444"/>
    </location>
</feature>
<feature type="coiled-coil region" evidence="2">
    <location>
        <begin position="641"/>
        <end position="723"/>
    </location>
</feature>
<feature type="coiled-coil region" evidence="2">
    <location>
        <begin position="861"/>
        <end position="902"/>
    </location>
</feature>
<feature type="compositionally biased region" description="Basic residues" evidence="3">
    <location>
        <begin position="1"/>
        <end position="11"/>
    </location>
</feature>
<feature type="compositionally biased region" description="Polar residues" evidence="3">
    <location>
        <begin position="14"/>
        <end position="31"/>
    </location>
</feature>
<feature type="binding site" evidence="2">
    <location>
        <begin position="69"/>
        <end position="76"/>
    </location>
    <ligand>
        <name>ATP</name>
        <dbReference type="ChEBI" id="CHEBI:30616"/>
    </ligand>
</feature>
<protein>
    <recommendedName>
        <fullName>Structural maintenance of chromosomes protein 5</fullName>
    </recommendedName>
</protein>